<feature type="chain" id="PRO_1000074450" description="UDP-N-acetylglucosamine--N-acetylmuramyl-(pentapeptide) pyrophosphoryl-undecaprenol N-acetylglucosamine transferase">
    <location>
        <begin position="1"/>
        <end position="367"/>
    </location>
</feature>
<feature type="binding site" evidence="1">
    <location>
        <begin position="11"/>
        <end position="13"/>
    </location>
    <ligand>
        <name>UDP-N-acetyl-alpha-D-glucosamine</name>
        <dbReference type="ChEBI" id="CHEBI:57705"/>
    </ligand>
</feature>
<feature type="binding site" evidence="1">
    <location>
        <position position="125"/>
    </location>
    <ligand>
        <name>UDP-N-acetyl-alpha-D-glucosamine</name>
        <dbReference type="ChEBI" id="CHEBI:57705"/>
    </ligand>
</feature>
<feature type="binding site" evidence="1">
    <location>
        <position position="163"/>
    </location>
    <ligand>
        <name>UDP-N-acetyl-alpha-D-glucosamine</name>
        <dbReference type="ChEBI" id="CHEBI:57705"/>
    </ligand>
</feature>
<feature type="binding site" evidence="1">
    <location>
        <position position="197"/>
    </location>
    <ligand>
        <name>UDP-N-acetyl-alpha-D-glucosamine</name>
        <dbReference type="ChEBI" id="CHEBI:57705"/>
    </ligand>
</feature>
<feature type="binding site" evidence="1">
    <location>
        <position position="289"/>
    </location>
    <ligand>
        <name>UDP-N-acetyl-alpha-D-glucosamine</name>
        <dbReference type="ChEBI" id="CHEBI:57705"/>
    </ligand>
</feature>
<protein>
    <recommendedName>
        <fullName evidence="1">UDP-N-acetylglucosamine--N-acetylmuramyl-(pentapeptide) pyrophosphoryl-undecaprenol N-acetylglucosamine transferase</fullName>
        <ecNumber evidence="1">2.4.1.227</ecNumber>
    </recommendedName>
    <alternativeName>
        <fullName evidence="1">Undecaprenyl-PP-MurNAc-pentapeptide-UDPGlcNAc GlcNAc transferase</fullName>
    </alternativeName>
</protein>
<organism>
    <name type="scientific">Clavibacter sepedonicus</name>
    <name type="common">Clavibacter michiganensis subsp. sepedonicus</name>
    <dbReference type="NCBI Taxonomy" id="31964"/>
    <lineage>
        <taxon>Bacteria</taxon>
        <taxon>Bacillati</taxon>
        <taxon>Actinomycetota</taxon>
        <taxon>Actinomycetes</taxon>
        <taxon>Micrococcales</taxon>
        <taxon>Microbacteriaceae</taxon>
        <taxon>Clavibacter</taxon>
    </lineage>
</organism>
<dbReference type="EC" id="2.4.1.227" evidence="1"/>
<dbReference type="EMBL" id="AM849034">
    <property type="protein sequence ID" value="CAQ01484.1"/>
    <property type="molecule type" value="Genomic_DNA"/>
</dbReference>
<dbReference type="RefSeq" id="WP_012298751.1">
    <property type="nucleotide sequence ID" value="NZ_MZMN01000003.1"/>
</dbReference>
<dbReference type="SMR" id="B0RIJ3"/>
<dbReference type="STRING" id="31964.CMS1373"/>
<dbReference type="CAZy" id="GT28">
    <property type="family name" value="Glycosyltransferase Family 28"/>
</dbReference>
<dbReference type="KEGG" id="cms:CMS1373"/>
<dbReference type="eggNOG" id="COG0707">
    <property type="taxonomic scope" value="Bacteria"/>
</dbReference>
<dbReference type="HOGENOM" id="CLU_037404_1_0_11"/>
<dbReference type="OrthoDB" id="9808936at2"/>
<dbReference type="UniPathway" id="UPA00219"/>
<dbReference type="Proteomes" id="UP000001318">
    <property type="component" value="Chromosome"/>
</dbReference>
<dbReference type="GO" id="GO:0005886">
    <property type="term" value="C:plasma membrane"/>
    <property type="evidence" value="ECO:0007669"/>
    <property type="project" value="UniProtKB-SubCell"/>
</dbReference>
<dbReference type="GO" id="GO:0051991">
    <property type="term" value="F:UDP-N-acetyl-D-glucosamine:N-acetylmuramoyl-L-alanyl-D-glutamyl-meso-2,6-diaminopimelyl-D-alanyl-D-alanine-diphosphoundecaprenol 4-beta-N-acetylglucosaminlytransferase activity"/>
    <property type="evidence" value="ECO:0007669"/>
    <property type="project" value="RHEA"/>
</dbReference>
<dbReference type="GO" id="GO:0050511">
    <property type="term" value="F:undecaprenyldiphospho-muramoylpentapeptide beta-N-acetylglucosaminyltransferase activity"/>
    <property type="evidence" value="ECO:0007669"/>
    <property type="project" value="UniProtKB-UniRule"/>
</dbReference>
<dbReference type="GO" id="GO:0005975">
    <property type="term" value="P:carbohydrate metabolic process"/>
    <property type="evidence" value="ECO:0007669"/>
    <property type="project" value="InterPro"/>
</dbReference>
<dbReference type="GO" id="GO:0051301">
    <property type="term" value="P:cell division"/>
    <property type="evidence" value="ECO:0007669"/>
    <property type="project" value="UniProtKB-KW"/>
</dbReference>
<dbReference type="GO" id="GO:0071555">
    <property type="term" value="P:cell wall organization"/>
    <property type="evidence" value="ECO:0007669"/>
    <property type="project" value="UniProtKB-KW"/>
</dbReference>
<dbReference type="GO" id="GO:0030259">
    <property type="term" value="P:lipid glycosylation"/>
    <property type="evidence" value="ECO:0007669"/>
    <property type="project" value="UniProtKB-UniRule"/>
</dbReference>
<dbReference type="GO" id="GO:0009252">
    <property type="term" value="P:peptidoglycan biosynthetic process"/>
    <property type="evidence" value="ECO:0007669"/>
    <property type="project" value="UniProtKB-UniRule"/>
</dbReference>
<dbReference type="GO" id="GO:0008360">
    <property type="term" value="P:regulation of cell shape"/>
    <property type="evidence" value="ECO:0007669"/>
    <property type="project" value="UniProtKB-KW"/>
</dbReference>
<dbReference type="CDD" id="cd03785">
    <property type="entry name" value="GT28_MurG"/>
    <property type="match status" value="1"/>
</dbReference>
<dbReference type="Gene3D" id="3.40.50.2000">
    <property type="entry name" value="Glycogen Phosphorylase B"/>
    <property type="match status" value="2"/>
</dbReference>
<dbReference type="HAMAP" id="MF_00033">
    <property type="entry name" value="MurG"/>
    <property type="match status" value="1"/>
</dbReference>
<dbReference type="InterPro" id="IPR006009">
    <property type="entry name" value="GlcNAc_MurG"/>
</dbReference>
<dbReference type="InterPro" id="IPR007235">
    <property type="entry name" value="Glyco_trans_28_C"/>
</dbReference>
<dbReference type="InterPro" id="IPR004276">
    <property type="entry name" value="GlycoTrans_28_N"/>
</dbReference>
<dbReference type="NCBIfam" id="TIGR01133">
    <property type="entry name" value="murG"/>
    <property type="match status" value="1"/>
</dbReference>
<dbReference type="PANTHER" id="PTHR21015:SF22">
    <property type="entry name" value="GLYCOSYLTRANSFERASE"/>
    <property type="match status" value="1"/>
</dbReference>
<dbReference type="PANTHER" id="PTHR21015">
    <property type="entry name" value="UDP-N-ACETYLGLUCOSAMINE--N-ACETYLMURAMYL-(PENTAPEPTIDE) PYROPHOSPHORYL-UNDECAPRENOL N-ACETYLGLUCOSAMINE TRANSFERASE 1"/>
    <property type="match status" value="1"/>
</dbReference>
<dbReference type="Pfam" id="PF04101">
    <property type="entry name" value="Glyco_tran_28_C"/>
    <property type="match status" value="1"/>
</dbReference>
<dbReference type="Pfam" id="PF03033">
    <property type="entry name" value="Glyco_transf_28"/>
    <property type="match status" value="1"/>
</dbReference>
<dbReference type="SUPFAM" id="SSF53756">
    <property type="entry name" value="UDP-Glycosyltransferase/glycogen phosphorylase"/>
    <property type="match status" value="1"/>
</dbReference>
<accession>B0RIJ3</accession>
<gene>
    <name evidence="1" type="primary">murG</name>
    <name type="ordered locus">CMS1373</name>
</gene>
<sequence>MTVYLLAGGGTAGHVNPLLAVADELRAREPGSTILVLGTREGLESRLVPARGYELLTIARLPFPRRPNGAAVRFAPAFTRAVGQIRRMIAERGVDVVVGFGGYAAAPAYLAARRSGVPVVVHEANASPGLANRLGARVATAVGITFPGTALGPRAEVVGMPLRREIATLDRDAVRDAARAELGLDADRPTLLVTGGSTGARSLNRTVVQVAERITATGAQILHIVGGAQEFTDPGVERYHVVGYSDRMELAIAAADLVVSRAGAGALSELTAVGIPAVYVPYPVGNGEQAVNVRGVVAAGGGIVVADADFTPDWVLAHVVPLLSDPAALARMSEAAASVGTRDGAARMADLVRDAVASRPSRPAVRR</sequence>
<evidence type="ECO:0000255" key="1">
    <source>
        <dbReference type="HAMAP-Rule" id="MF_00033"/>
    </source>
</evidence>
<name>MURG_CLASE</name>
<comment type="function">
    <text evidence="1">Cell wall formation. Catalyzes the transfer of a GlcNAc subunit on undecaprenyl-pyrophosphoryl-MurNAc-pentapeptide (lipid intermediate I) to form undecaprenyl-pyrophosphoryl-MurNAc-(pentapeptide)GlcNAc (lipid intermediate II).</text>
</comment>
<comment type="catalytic activity">
    <reaction evidence="1">
        <text>di-trans,octa-cis-undecaprenyl diphospho-N-acetyl-alpha-D-muramoyl-L-alanyl-D-glutamyl-meso-2,6-diaminopimeloyl-D-alanyl-D-alanine + UDP-N-acetyl-alpha-D-glucosamine = di-trans,octa-cis-undecaprenyl diphospho-[N-acetyl-alpha-D-glucosaminyl-(1-&gt;4)]-N-acetyl-alpha-D-muramoyl-L-alanyl-D-glutamyl-meso-2,6-diaminopimeloyl-D-alanyl-D-alanine + UDP + H(+)</text>
        <dbReference type="Rhea" id="RHEA:31227"/>
        <dbReference type="ChEBI" id="CHEBI:15378"/>
        <dbReference type="ChEBI" id="CHEBI:57705"/>
        <dbReference type="ChEBI" id="CHEBI:58223"/>
        <dbReference type="ChEBI" id="CHEBI:61387"/>
        <dbReference type="ChEBI" id="CHEBI:61388"/>
        <dbReference type="EC" id="2.4.1.227"/>
    </reaction>
</comment>
<comment type="pathway">
    <text evidence="1">Cell wall biogenesis; peptidoglycan biosynthesis.</text>
</comment>
<comment type="subcellular location">
    <subcellularLocation>
        <location evidence="1">Cell membrane</location>
        <topology evidence="1">Peripheral membrane protein</topology>
        <orientation evidence="1">Cytoplasmic side</orientation>
    </subcellularLocation>
</comment>
<comment type="similarity">
    <text evidence="1">Belongs to the glycosyltransferase 28 family. MurG subfamily.</text>
</comment>
<proteinExistence type="inferred from homology"/>
<reference key="1">
    <citation type="journal article" date="2008" name="J. Bacteriol.">
        <title>Genome of the actinomycete plant pathogen Clavibacter michiganensis subsp. sepedonicus suggests recent niche adaptation.</title>
        <authorList>
            <person name="Bentley S.D."/>
            <person name="Corton C."/>
            <person name="Brown S.E."/>
            <person name="Barron A."/>
            <person name="Clark L."/>
            <person name="Doggett J."/>
            <person name="Harris B."/>
            <person name="Ormond D."/>
            <person name="Quail M.A."/>
            <person name="May G."/>
            <person name="Francis D."/>
            <person name="Knudson D."/>
            <person name="Parkhill J."/>
            <person name="Ishimaru C.A."/>
        </authorList>
    </citation>
    <scope>NUCLEOTIDE SEQUENCE [LARGE SCALE GENOMIC DNA]</scope>
    <source>
        <strain>ATCC 33113 / DSM 20744 / JCM 9667 / LMG 2889 / ICMP 2535 / C-1</strain>
    </source>
</reference>
<keyword id="KW-0131">Cell cycle</keyword>
<keyword id="KW-0132">Cell division</keyword>
<keyword id="KW-1003">Cell membrane</keyword>
<keyword id="KW-0133">Cell shape</keyword>
<keyword id="KW-0961">Cell wall biogenesis/degradation</keyword>
<keyword id="KW-0328">Glycosyltransferase</keyword>
<keyword id="KW-0472">Membrane</keyword>
<keyword id="KW-0573">Peptidoglycan synthesis</keyword>
<keyword id="KW-0808">Transferase</keyword>